<reference key="1">
    <citation type="submission" date="2005-06" db="EMBL/GenBank/DDBJ databases">
        <authorList>
            <consortium name="NIH - Xenopus Gene Collection (XGC) project"/>
        </authorList>
    </citation>
    <scope>NUCLEOTIDE SEQUENCE [LARGE SCALE MRNA]</scope>
    <source>
        <tissue>Egg</tissue>
    </source>
</reference>
<protein>
    <recommendedName>
        <fullName>Mediator of RNA polymerase II transcription subunit 9</fullName>
    </recommendedName>
    <alternativeName>
        <fullName>Mediator complex subunit 9</fullName>
    </alternativeName>
</protein>
<comment type="function">
    <text evidence="1">Component of the Mediator complex, a coactivator involved in the regulated transcription of nearly all RNA polymerase II-dependent genes. Mediator functions as a bridge to convey information from gene-specific regulatory proteins to the basal RNA polymerase II transcription machinery. Mediator is recruited to promoters by direct interactions with regulatory proteins and serves as a scaffold for the assembly of a functional preinitiation complex with RNA polymerase II and the general transcription factors (By similarity).</text>
</comment>
<comment type="subunit">
    <text evidence="1">Component of the Mediator complex.</text>
</comment>
<comment type="subcellular location">
    <subcellularLocation>
        <location evidence="4">Nucleus</location>
    </subcellularLocation>
</comment>
<comment type="similarity">
    <text evidence="4">Belongs to the Mediator complex subunit 9 family.</text>
</comment>
<accession>Q4V7L5</accession>
<dbReference type="EMBL" id="BC097840">
    <property type="protein sequence ID" value="AAH97840.1"/>
    <property type="molecule type" value="mRNA"/>
</dbReference>
<dbReference type="RefSeq" id="NP_001089541.1">
    <property type="nucleotide sequence ID" value="NM_001096072.1"/>
</dbReference>
<dbReference type="SMR" id="Q4V7L5"/>
<dbReference type="DNASU" id="734597"/>
<dbReference type="GeneID" id="734597"/>
<dbReference type="KEGG" id="xla:734597"/>
<dbReference type="AGR" id="Xenbase:XB-GENE-987613"/>
<dbReference type="CTD" id="734597"/>
<dbReference type="Xenbase" id="XB-GENE-987613">
    <property type="gene designation" value="med9.L"/>
</dbReference>
<dbReference type="OMA" id="LKYRNMC"/>
<dbReference type="OrthoDB" id="5950777at2759"/>
<dbReference type="Proteomes" id="UP000186698">
    <property type="component" value="Chromosome 9_10L"/>
</dbReference>
<dbReference type="Bgee" id="734597">
    <property type="expression patterns" value="Expressed in neurula embryo and 19 other cell types or tissues"/>
</dbReference>
<dbReference type="GO" id="GO:0016592">
    <property type="term" value="C:mediator complex"/>
    <property type="evidence" value="ECO:0000318"/>
    <property type="project" value="GO_Central"/>
</dbReference>
<dbReference type="GO" id="GO:0003712">
    <property type="term" value="F:transcription coregulator activity"/>
    <property type="evidence" value="ECO:0007669"/>
    <property type="project" value="InterPro"/>
</dbReference>
<dbReference type="GO" id="GO:0006357">
    <property type="term" value="P:regulation of transcription by RNA polymerase II"/>
    <property type="evidence" value="ECO:0007669"/>
    <property type="project" value="InterPro"/>
</dbReference>
<dbReference type="CDD" id="cd21431">
    <property type="entry name" value="Med9-C"/>
    <property type="match status" value="1"/>
</dbReference>
<dbReference type="InterPro" id="IPR037212">
    <property type="entry name" value="Med7/Med21-like"/>
</dbReference>
<dbReference type="InterPro" id="IPR011425">
    <property type="entry name" value="Med9"/>
</dbReference>
<dbReference type="InterPro" id="IPR039242">
    <property type="entry name" value="MED9_metazoa"/>
</dbReference>
<dbReference type="PANTHER" id="PTHR20844:SF0">
    <property type="entry name" value="MEDIATOR OF RNA POLYMERASE II TRANSCRIPTION SUBUNIT 9"/>
    <property type="match status" value="1"/>
</dbReference>
<dbReference type="PANTHER" id="PTHR20844">
    <property type="entry name" value="MEDIATOR OF RNA POLYMERASE II TRANSCRIPTION, SUBUNIT 9"/>
    <property type="match status" value="1"/>
</dbReference>
<dbReference type="Pfam" id="PF07544">
    <property type="entry name" value="Med9"/>
    <property type="match status" value="1"/>
</dbReference>
<dbReference type="SUPFAM" id="SSF140718">
    <property type="entry name" value="Mediator hinge subcomplex-like"/>
    <property type="match status" value="1"/>
</dbReference>
<evidence type="ECO:0000250" key="1"/>
<evidence type="ECO:0000255" key="2"/>
<evidence type="ECO:0000256" key="3">
    <source>
        <dbReference type="SAM" id="MobiDB-lite"/>
    </source>
</evidence>
<evidence type="ECO:0000305" key="4"/>
<gene>
    <name type="primary">med9</name>
</gene>
<sequence>MATGGTVRPAEEPEEEEEEEDEAVEEEEEEDYTFLPLVHDIIKCMDKDSQDVYQELNELKSKFQAMRKLVGNMPGIDMSPEEQQRHLQSLREQVQTKSELLQKYKSLCMFEIPKE</sequence>
<proteinExistence type="inferred from homology"/>
<keyword id="KW-0010">Activator</keyword>
<keyword id="KW-0175">Coiled coil</keyword>
<keyword id="KW-0539">Nucleus</keyword>
<keyword id="KW-1185">Reference proteome</keyword>
<keyword id="KW-0804">Transcription</keyword>
<keyword id="KW-0805">Transcription regulation</keyword>
<organism>
    <name type="scientific">Xenopus laevis</name>
    <name type="common">African clawed frog</name>
    <dbReference type="NCBI Taxonomy" id="8355"/>
    <lineage>
        <taxon>Eukaryota</taxon>
        <taxon>Metazoa</taxon>
        <taxon>Chordata</taxon>
        <taxon>Craniata</taxon>
        <taxon>Vertebrata</taxon>
        <taxon>Euteleostomi</taxon>
        <taxon>Amphibia</taxon>
        <taxon>Batrachia</taxon>
        <taxon>Anura</taxon>
        <taxon>Pipoidea</taxon>
        <taxon>Pipidae</taxon>
        <taxon>Xenopodinae</taxon>
        <taxon>Xenopus</taxon>
        <taxon>Xenopus</taxon>
    </lineage>
</organism>
<feature type="chain" id="PRO_0000304149" description="Mediator of RNA polymerase II transcription subunit 9">
    <location>
        <begin position="1"/>
        <end position="115"/>
    </location>
</feature>
<feature type="region of interest" description="Disordered" evidence="3">
    <location>
        <begin position="1"/>
        <end position="31"/>
    </location>
</feature>
<feature type="coiled-coil region" evidence="2">
    <location>
        <begin position="31"/>
        <end position="107"/>
    </location>
</feature>
<feature type="compositionally biased region" description="Acidic residues" evidence="3">
    <location>
        <begin position="12"/>
        <end position="31"/>
    </location>
</feature>
<name>MED9_XENLA</name>